<protein>
    <recommendedName>
        <fullName evidence="1">4-hydroxy-tetrahydrodipicolinate synthase</fullName>
        <shortName evidence="1">HTPA synthase</shortName>
        <ecNumber evidence="1">4.3.3.7</ecNumber>
    </recommendedName>
</protein>
<accession>Q6AA18</accession>
<comment type="function">
    <text evidence="1">Catalyzes the condensation of (S)-aspartate-beta-semialdehyde [(S)-ASA] and pyruvate to 4-hydroxy-tetrahydrodipicolinate (HTPA).</text>
</comment>
<comment type="catalytic activity">
    <reaction evidence="1">
        <text>L-aspartate 4-semialdehyde + pyruvate = (2S,4S)-4-hydroxy-2,3,4,5-tetrahydrodipicolinate + H2O + H(+)</text>
        <dbReference type="Rhea" id="RHEA:34171"/>
        <dbReference type="ChEBI" id="CHEBI:15361"/>
        <dbReference type="ChEBI" id="CHEBI:15377"/>
        <dbReference type="ChEBI" id="CHEBI:15378"/>
        <dbReference type="ChEBI" id="CHEBI:67139"/>
        <dbReference type="ChEBI" id="CHEBI:537519"/>
        <dbReference type="EC" id="4.3.3.7"/>
    </reaction>
</comment>
<comment type="pathway">
    <text evidence="1">Amino-acid biosynthesis; L-lysine biosynthesis via DAP pathway; (S)-tetrahydrodipicolinate from L-aspartate: step 3/4.</text>
</comment>
<comment type="subunit">
    <text evidence="1">Homotetramer; dimer of dimers.</text>
</comment>
<comment type="subcellular location">
    <subcellularLocation>
        <location evidence="1">Cytoplasm</location>
    </subcellularLocation>
</comment>
<comment type="similarity">
    <text evidence="1">Belongs to the DapA family.</text>
</comment>
<comment type="caution">
    <text evidence="2">Was originally thought to be a dihydrodipicolinate synthase (DHDPS), catalyzing the condensation of (S)-aspartate-beta-semialdehyde [(S)-ASA] and pyruvate to dihydrodipicolinate (DHDP). However, it was shown in E.coli that the product of the enzymatic reaction is not dihydrodipicolinate but in fact (4S)-4-hydroxy-2,3,4,5-tetrahydro-(2S)-dipicolinic acid (HTPA), and that the consecutive dehydration reaction leading to DHDP is not spontaneous but catalyzed by DapB.</text>
</comment>
<dbReference type="EC" id="4.3.3.7" evidence="1"/>
<dbReference type="EMBL" id="AE017283">
    <property type="protein sequence ID" value="AAT82398.1"/>
    <property type="molecule type" value="Genomic_DNA"/>
</dbReference>
<dbReference type="RefSeq" id="WP_002514058.1">
    <property type="nucleotide sequence ID" value="NZ_CP025935.1"/>
</dbReference>
<dbReference type="SMR" id="Q6AA18"/>
<dbReference type="EnsemblBacteria" id="AAT82398">
    <property type="protein sequence ID" value="AAT82398"/>
    <property type="gene ID" value="PPA0642"/>
</dbReference>
<dbReference type="GeneID" id="92856626"/>
<dbReference type="KEGG" id="pac:PPA0642"/>
<dbReference type="eggNOG" id="COG0329">
    <property type="taxonomic scope" value="Bacteria"/>
</dbReference>
<dbReference type="HOGENOM" id="CLU_049343_7_1_11"/>
<dbReference type="UniPathway" id="UPA00034">
    <property type="reaction ID" value="UER00017"/>
</dbReference>
<dbReference type="Proteomes" id="UP000000603">
    <property type="component" value="Chromosome"/>
</dbReference>
<dbReference type="GO" id="GO:0005829">
    <property type="term" value="C:cytosol"/>
    <property type="evidence" value="ECO:0007669"/>
    <property type="project" value="TreeGrafter"/>
</dbReference>
<dbReference type="GO" id="GO:0008840">
    <property type="term" value="F:4-hydroxy-tetrahydrodipicolinate synthase activity"/>
    <property type="evidence" value="ECO:0007669"/>
    <property type="project" value="UniProtKB-UniRule"/>
</dbReference>
<dbReference type="GO" id="GO:0019877">
    <property type="term" value="P:diaminopimelate biosynthetic process"/>
    <property type="evidence" value="ECO:0007669"/>
    <property type="project" value="UniProtKB-UniRule"/>
</dbReference>
<dbReference type="GO" id="GO:0009089">
    <property type="term" value="P:lysine biosynthetic process via diaminopimelate"/>
    <property type="evidence" value="ECO:0007669"/>
    <property type="project" value="UniProtKB-UniRule"/>
</dbReference>
<dbReference type="CDD" id="cd00950">
    <property type="entry name" value="DHDPS"/>
    <property type="match status" value="1"/>
</dbReference>
<dbReference type="Gene3D" id="3.20.20.70">
    <property type="entry name" value="Aldolase class I"/>
    <property type="match status" value="1"/>
</dbReference>
<dbReference type="HAMAP" id="MF_00418">
    <property type="entry name" value="DapA"/>
    <property type="match status" value="1"/>
</dbReference>
<dbReference type="InterPro" id="IPR013785">
    <property type="entry name" value="Aldolase_TIM"/>
</dbReference>
<dbReference type="InterPro" id="IPR005263">
    <property type="entry name" value="DapA"/>
</dbReference>
<dbReference type="InterPro" id="IPR002220">
    <property type="entry name" value="DapA-like"/>
</dbReference>
<dbReference type="InterPro" id="IPR020625">
    <property type="entry name" value="Schiff_base-form_aldolases_AS"/>
</dbReference>
<dbReference type="InterPro" id="IPR020624">
    <property type="entry name" value="Schiff_base-form_aldolases_CS"/>
</dbReference>
<dbReference type="NCBIfam" id="TIGR00674">
    <property type="entry name" value="dapA"/>
    <property type="match status" value="1"/>
</dbReference>
<dbReference type="PANTHER" id="PTHR12128:SF66">
    <property type="entry name" value="4-HYDROXY-2-OXOGLUTARATE ALDOLASE, MITOCHONDRIAL"/>
    <property type="match status" value="1"/>
</dbReference>
<dbReference type="PANTHER" id="PTHR12128">
    <property type="entry name" value="DIHYDRODIPICOLINATE SYNTHASE"/>
    <property type="match status" value="1"/>
</dbReference>
<dbReference type="Pfam" id="PF00701">
    <property type="entry name" value="DHDPS"/>
    <property type="match status" value="1"/>
</dbReference>
<dbReference type="PIRSF" id="PIRSF001365">
    <property type="entry name" value="DHDPS"/>
    <property type="match status" value="1"/>
</dbReference>
<dbReference type="PRINTS" id="PR00146">
    <property type="entry name" value="DHPICSNTHASE"/>
</dbReference>
<dbReference type="SMART" id="SM01130">
    <property type="entry name" value="DHDPS"/>
    <property type="match status" value="1"/>
</dbReference>
<dbReference type="SUPFAM" id="SSF51569">
    <property type="entry name" value="Aldolase"/>
    <property type="match status" value="1"/>
</dbReference>
<dbReference type="PROSITE" id="PS00665">
    <property type="entry name" value="DHDPS_1"/>
    <property type="match status" value="1"/>
</dbReference>
<dbReference type="PROSITE" id="PS00666">
    <property type="entry name" value="DHDPS_2"/>
    <property type="match status" value="1"/>
</dbReference>
<gene>
    <name evidence="1" type="primary">dapA</name>
    <name type="ordered locus">PPA0642</name>
</gene>
<keyword id="KW-0028">Amino-acid biosynthesis</keyword>
<keyword id="KW-0963">Cytoplasm</keyword>
<keyword id="KW-0220">Diaminopimelate biosynthesis</keyword>
<keyword id="KW-0456">Lyase</keyword>
<keyword id="KW-0457">Lysine biosynthesis</keyword>
<keyword id="KW-0704">Schiff base</keyword>
<sequence>MSAPVFGRLLTAMVTPMTFDGAVDLRRTGELAHKLVEEQNNDGIVVNGTTGESPTTTDSEKAEIVKAVVEAVGSDAAVVAGVGTNDTAHTIELAHQAAEAGADGLLVVTPYYSKPSQAGIIEHFTAVADATDLPIMLYDIPGRTGTPIETKTLIELADHARIVAVKDAKGLVVESATVMASTTLAYYSGDDAITPALLSVGGVGLVGTSTHFTGRRMHEVIDAYVDGRIDEALSTYREILPVLTGVFAAQGATMVKAGLAHQGFTVGRVRPPQTMPTPEQAETFFGVLDRTQL</sequence>
<proteinExistence type="inferred from homology"/>
<evidence type="ECO:0000255" key="1">
    <source>
        <dbReference type="HAMAP-Rule" id="MF_00418"/>
    </source>
</evidence>
<evidence type="ECO:0000305" key="2"/>
<organism>
    <name type="scientific">Cutibacterium acnes (strain DSM 16379 / KPA171202)</name>
    <name type="common">Propionibacterium acnes</name>
    <dbReference type="NCBI Taxonomy" id="267747"/>
    <lineage>
        <taxon>Bacteria</taxon>
        <taxon>Bacillati</taxon>
        <taxon>Actinomycetota</taxon>
        <taxon>Actinomycetes</taxon>
        <taxon>Propionibacteriales</taxon>
        <taxon>Propionibacteriaceae</taxon>
        <taxon>Cutibacterium</taxon>
    </lineage>
</organism>
<feature type="chain" id="PRO_0000340979" description="4-hydroxy-tetrahydrodipicolinate synthase">
    <location>
        <begin position="1"/>
        <end position="293"/>
    </location>
</feature>
<feature type="active site" description="Proton donor/acceptor" evidence="1">
    <location>
        <position position="138"/>
    </location>
</feature>
<feature type="active site" description="Schiff-base intermediate with substrate" evidence="1">
    <location>
        <position position="166"/>
    </location>
</feature>
<feature type="binding site" evidence="1">
    <location>
        <position position="50"/>
    </location>
    <ligand>
        <name>pyruvate</name>
        <dbReference type="ChEBI" id="CHEBI:15361"/>
    </ligand>
</feature>
<feature type="binding site" evidence="1">
    <location>
        <position position="206"/>
    </location>
    <ligand>
        <name>pyruvate</name>
        <dbReference type="ChEBI" id="CHEBI:15361"/>
    </ligand>
</feature>
<feature type="site" description="Part of a proton relay during catalysis" evidence="1">
    <location>
        <position position="49"/>
    </location>
</feature>
<feature type="site" description="Part of a proton relay during catalysis" evidence="1">
    <location>
        <position position="112"/>
    </location>
</feature>
<name>DAPA_CUTAK</name>
<reference key="1">
    <citation type="journal article" date="2004" name="Science">
        <title>The complete genome sequence of Propionibacterium acnes, a commensal of human skin.</title>
        <authorList>
            <person name="Brueggemann H."/>
            <person name="Henne A."/>
            <person name="Hoster F."/>
            <person name="Liesegang H."/>
            <person name="Wiezer A."/>
            <person name="Strittmatter A."/>
            <person name="Hujer S."/>
            <person name="Duerre P."/>
            <person name="Gottschalk G."/>
        </authorList>
    </citation>
    <scope>NUCLEOTIDE SEQUENCE [LARGE SCALE GENOMIC DNA]</scope>
    <source>
        <strain>DSM 16379 / KPA171202</strain>
    </source>
</reference>